<accession>B4R8M7</accession>
<protein>
    <recommendedName>
        <fullName evidence="1">Large ribosomal subunit protein uL14</fullName>
    </recommendedName>
    <alternativeName>
        <fullName evidence="2">50S ribosomal protein L14</fullName>
    </alternativeName>
</protein>
<feature type="chain" id="PRO_1000144307" description="Large ribosomal subunit protein uL14">
    <location>
        <begin position="1"/>
        <end position="122"/>
    </location>
</feature>
<sequence length="122" mass="13344">MIQMQTNLDVADNSGARRVMCIKVLGGAKRRYAGVGDKIVVSVKEAIPRGRVKKGDVLQAIVVRTSQGIKRKDGSVIRFDKNAAVIVNKQSEPIGTRIFGPVPRELRAKNHMKIISLAPEVL</sequence>
<proteinExistence type="inferred from homology"/>
<evidence type="ECO:0000255" key="1">
    <source>
        <dbReference type="HAMAP-Rule" id="MF_01367"/>
    </source>
</evidence>
<evidence type="ECO:0000305" key="2"/>
<reference key="1">
    <citation type="journal article" date="2008" name="BMC Genomics">
        <title>Complete genome of Phenylobacterium zucineum - a novel facultative intracellular bacterium isolated from human erythroleukemia cell line K562.</title>
        <authorList>
            <person name="Luo Y."/>
            <person name="Xu X."/>
            <person name="Ding Z."/>
            <person name="Liu Z."/>
            <person name="Zhang B."/>
            <person name="Yan Z."/>
            <person name="Sun J."/>
            <person name="Hu S."/>
            <person name="Hu X."/>
        </authorList>
    </citation>
    <scope>NUCLEOTIDE SEQUENCE [LARGE SCALE GENOMIC DNA]</scope>
    <source>
        <strain>HLK1</strain>
    </source>
</reference>
<keyword id="KW-1185">Reference proteome</keyword>
<keyword id="KW-0687">Ribonucleoprotein</keyword>
<keyword id="KW-0689">Ribosomal protein</keyword>
<keyword id="KW-0694">RNA-binding</keyword>
<keyword id="KW-0699">rRNA-binding</keyword>
<comment type="function">
    <text evidence="1">Binds to 23S rRNA. Forms part of two intersubunit bridges in the 70S ribosome.</text>
</comment>
<comment type="subunit">
    <text evidence="1">Part of the 50S ribosomal subunit. Forms a cluster with proteins L3 and L19. In the 70S ribosome, L14 and L19 interact and together make contacts with the 16S rRNA in bridges B5 and B8.</text>
</comment>
<comment type="similarity">
    <text evidence="1">Belongs to the universal ribosomal protein uL14 family.</text>
</comment>
<dbReference type="EMBL" id="CP000747">
    <property type="protein sequence ID" value="ACG77654.1"/>
    <property type="molecule type" value="Genomic_DNA"/>
</dbReference>
<dbReference type="RefSeq" id="WP_012521798.1">
    <property type="nucleotide sequence ID" value="NC_011144.1"/>
</dbReference>
<dbReference type="SMR" id="B4R8M7"/>
<dbReference type="STRING" id="450851.PHZ_c1240"/>
<dbReference type="KEGG" id="pzu:PHZ_c1240"/>
<dbReference type="eggNOG" id="COG0093">
    <property type="taxonomic scope" value="Bacteria"/>
</dbReference>
<dbReference type="HOGENOM" id="CLU_095071_2_1_5"/>
<dbReference type="OrthoDB" id="9806379at2"/>
<dbReference type="Proteomes" id="UP000001868">
    <property type="component" value="Chromosome"/>
</dbReference>
<dbReference type="GO" id="GO:0022625">
    <property type="term" value="C:cytosolic large ribosomal subunit"/>
    <property type="evidence" value="ECO:0007669"/>
    <property type="project" value="TreeGrafter"/>
</dbReference>
<dbReference type="GO" id="GO:0070180">
    <property type="term" value="F:large ribosomal subunit rRNA binding"/>
    <property type="evidence" value="ECO:0007669"/>
    <property type="project" value="TreeGrafter"/>
</dbReference>
<dbReference type="GO" id="GO:0003735">
    <property type="term" value="F:structural constituent of ribosome"/>
    <property type="evidence" value="ECO:0007669"/>
    <property type="project" value="InterPro"/>
</dbReference>
<dbReference type="GO" id="GO:0006412">
    <property type="term" value="P:translation"/>
    <property type="evidence" value="ECO:0007669"/>
    <property type="project" value="UniProtKB-UniRule"/>
</dbReference>
<dbReference type="CDD" id="cd00337">
    <property type="entry name" value="Ribosomal_uL14"/>
    <property type="match status" value="1"/>
</dbReference>
<dbReference type="FunFam" id="2.40.150.20:FF:000001">
    <property type="entry name" value="50S ribosomal protein L14"/>
    <property type="match status" value="1"/>
</dbReference>
<dbReference type="Gene3D" id="2.40.150.20">
    <property type="entry name" value="Ribosomal protein L14"/>
    <property type="match status" value="1"/>
</dbReference>
<dbReference type="HAMAP" id="MF_01367">
    <property type="entry name" value="Ribosomal_uL14"/>
    <property type="match status" value="1"/>
</dbReference>
<dbReference type="InterPro" id="IPR000218">
    <property type="entry name" value="Ribosomal_uL14"/>
</dbReference>
<dbReference type="InterPro" id="IPR005745">
    <property type="entry name" value="Ribosomal_uL14_bac-type"/>
</dbReference>
<dbReference type="InterPro" id="IPR019972">
    <property type="entry name" value="Ribosomal_uL14_CS"/>
</dbReference>
<dbReference type="InterPro" id="IPR036853">
    <property type="entry name" value="Ribosomal_uL14_sf"/>
</dbReference>
<dbReference type="NCBIfam" id="TIGR01067">
    <property type="entry name" value="rplN_bact"/>
    <property type="match status" value="1"/>
</dbReference>
<dbReference type="PANTHER" id="PTHR11761">
    <property type="entry name" value="50S/60S RIBOSOMAL PROTEIN L14/L23"/>
    <property type="match status" value="1"/>
</dbReference>
<dbReference type="PANTHER" id="PTHR11761:SF3">
    <property type="entry name" value="LARGE RIBOSOMAL SUBUNIT PROTEIN UL14M"/>
    <property type="match status" value="1"/>
</dbReference>
<dbReference type="Pfam" id="PF00238">
    <property type="entry name" value="Ribosomal_L14"/>
    <property type="match status" value="1"/>
</dbReference>
<dbReference type="SMART" id="SM01374">
    <property type="entry name" value="Ribosomal_L14"/>
    <property type="match status" value="1"/>
</dbReference>
<dbReference type="SUPFAM" id="SSF50193">
    <property type="entry name" value="Ribosomal protein L14"/>
    <property type="match status" value="1"/>
</dbReference>
<dbReference type="PROSITE" id="PS00049">
    <property type="entry name" value="RIBOSOMAL_L14"/>
    <property type="match status" value="1"/>
</dbReference>
<organism>
    <name type="scientific">Phenylobacterium zucineum (strain HLK1)</name>
    <dbReference type="NCBI Taxonomy" id="450851"/>
    <lineage>
        <taxon>Bacteria</taxon>
        <taxon>Pseudomonadati</taxon>
        <taxon>Pseudomonadota</taxon>
        <taxon>Alphaproteobacteria</taxon>
        <taxon>Caulobacterales</taxon>
        <taxon>Caulobacteraceae</taxon>
        <taxon>Phenylobacterium</taxon>
    </lineage>
</organism>
<name>RL14_PHEZH</name>
<gene>
    <name evidence="1" type="primary">rplN</name>
    <name type="ordered locus">PHZ_c1240</name>
</gene>